<reference key="1">
    <citation type="journal article" date="2007" name="PLoS Genet.">
        <title>Patterns and implications of gene gain and loss in the evolution of Prochlorococcus.</title>
        <authorList>
            <person name="Kettler G.C."/>
            <person name="Martiny A.C."/>
            <person name="Huang K."/>
            <person name="Zucker J."/>
            <person name="Coleman M.L."/>
            <person name="Rodrigue S."/>
            <person name="Chen F."/>
            <person name="Lapidus A."/>
            <person name="Ferriera S."/>
            <person name="Johnson J."/>
            <person name="Steglich C."/>
            <person name="Church G.M."/>
            <person name="Richardson P."/>
            <person name="Chisholm S.W."/>
        </authorList>
    </citation>
    <scope>NUCLEOTIDE SEQUENCE [LARGE SCALE GENOMIC DNA]</scope>
    <source>
        <strain>MIT 9215</strain>
    </source>
</reference>
<organism>
    <name type="scientific">Prochlorococcus marinus (strain MIT 9215)</name>
    <dbReference type="NCBI Taxonomy" id="93060"/>
    <lineage>
        <taxon>Bacteria</taxon>
        <taxon>Bacillati</taxon>
        <taxon>Cyanobacteriota</taxon>
        <taxon>Cyanophyceae</taxon>
        <taxon>Synechococcales</taxon>
        <taxon>Prochlorococcaceae</taxon>
        <taxon>Prochlorococcus</taxon>
    </lineage>
</organism>
<proteinExistence type="inferred from homology"/>
<accession>A8G2W1</accession>
<comment type="function">
    <text evidence="1">One of the components of the core complex of photosystem II (PSII). PSII is a light-driven water:plastoquinone oxidoreductase that uses light energy to abstract electrons from H(2)O, generating O(2) and a proton gradient subsequently used for ATP formation. It consists of a core antenna complex that captures photons, and an electron transfer chain that converts photonic excitation into a charge separation.</text>
</comment>
<comment type="subunit">
    <text evidence="2">PSII is composed of 1 copy each of membrane proteins PsbA, PsbB, PsbC, PsbD, PsbE, PsbF, PsbH, PsbI, PsbJ, PsbK, PsbL, PsbM, PsbT, PsbX, PsbY, Psb30/Ycf12, peripheral proteins PsbO, CyanoQ (PsbQ), PsbU, PsbV and a large number of cofactors. It forms dimeric complexes.</text>
</comment>
<comment type="subcellular location">
    <subcellularLocation>
        <location evidence="1">Cellular thylakoid membrane</location>
        <topology evidence="1">Single-pass membrane protein</topology>
    </subcellularLocation>
</comment>
<comment type="similarity">
    <text evidence="1">Belongs to the PsbJ family.</text>
</comment>
<dbReference type="EMBL" id="CP000825">
    <property type="protein sequence ID" value="ABV49942.1"/>
    <property type="molecule type" value="Genomic_DNA"/>
</dbReference>
<dbReference type="RefSeq" id="WP_012007096.1">
    <property type="nucleotide sequence ID" value="NC_009840.1"/>
</dbReference>
<dbReference type="SMR" id="A8G2W1"/>
<dbReference type="STRING" id="93060.P9215_03251"/>
<dbReference type="KEGG" id="pmh:P9215_03251"/>
<dbReference type="eggNOG" id="ENOG5030SSF">
    <property type="taxonomic scope" value="Bacteria"/>
</dbReference>
<dbReference type="HOGENOM" id="CLU_2829784_0_0_3"/>
<dbReference type="OrthoDB" id="466474at2"/>
<dbReference type="Proteomes" id="UP000002014">
    <property type="component" value="Chromosome"/>
</dbReference>
<dbReference type="GO" id="GO:0009539">
    <property type="term" value="C:photosystem II reaction center"/>
    <property type="evidence" value="ECO:0007669"/>
    <property type="project" value="InterPro"/>
</dbReference>
<dbReference type="GO" id="GO:0031676">
    <property type="term" value="C:plasma membrane-derived thylakoid membrane"/>
    <property type="evidence" value="ECO:0007669"/>
    <property type="project" value="UniProtKB-SubCell"/>
</dbReference>
<dbReference type="GO" id="GO:0015979">
    <property type="term" value="P:photosynthesis"/>
    <property type="evidence" value="ECO:0007669"/>
    <property type="project" value="UniProtKB-UniRule"/>
</dbReference>
<dbReference type="Gene3D" id="6.10.250.2070">
    <property type="match status" value="1"/>
</dbReference>
<dbReference type="HAMAP" id="MF_01305">
    <property type="entry name" value="PSII_PsbJ"/>
    <property type="match status" value="1"/>
</dbReference>
<dbReference type="InterPro" id="IPR002682">
    <property type="entry name" value="PSII_PsbJ"/>
</dbReference>
<dbReference type="InterPro" id="IPR037267">
    <property type="entry name" value="PSII_PsbJ_sf"/>
</dbReference>
<dbReference type="NCBIfam" id="NF002722">
    <property type="entry name" value="PRK02565.1"/>
    <property type="match status" value="1"/>
</dbReference>
<dbReference type="PANTHER" id="PTHR34812">
    <property type="entry name" value="PHOTOSYSTEM II REACTION CENTER PROTEIN J"/>
    <property type="match status" value="1"/>
</dbReference>
<dbReference type="PANTHER" id="PTHR34812:SF3">
    <property type="entry name" value="PHOTOSYSTEM II REACTION CENTER PROTEIN J"/>
    <property type="match status" value="1"/>
</dbReference>
<dbReference type="Pfam" id="PF01788">
    <property type="entry name" value="PsbJ"/>
    <property type="match status" value="1"/>
</dbReference>
<dbReference type="SUPFAM" id="SSF161021">
    <property type="entry name" value="Photosystem II reaction center protein J, PsbJ"/>
    <property type="match status" value="1"/>
</dbReference>
<evidence type="ECO:0000255" key="1">
    <source>
        <dbReference type="HAMAP-Rule" id="MF_01305"/>
    </source>
</evidence>
<evidence type="ECO:0000305" key="2"/>
<feature type="chain" id="PRO_1000067497" description="Photosystem II reaction center protein J">
    <location>
        <begin position="1"/>
        <end position="66"/>
    </location>
</feature>
<feature type="transmembrane region" description="Helical" evidence="1">
    <location>
        <begin position="36"/>
        <end position="56"/>
    </location>
</feature>
<sequence>MSKKLKGPDGRIPDRLPDGRPAVAWERRWTEGTLPLWLVATAGGIAVIFVLGIFFYGSYQGVGAGG</sequence>
<gene>
    <name evidence="1" type="primary">psbJ</name>
    <name type="ordered locus">P9215_03251</name>
</gene>
<name>PSBJ_PROM2</name>
<keyword id="KW-0472">Membrane</keyword>
<keyword id="KW-0602">Photosynthesis</keyword>
<keyword id="KW-0604">Photosystem II</keyword>
<keyword id="KW-0674">Reaction center</keyword>
<keyword id="KW-0793">Thylakoid</keyword>
<keyword id="KW-0812">Transmembrane</keyword>
<keyword id="KW-1133">Transmembrane helix</keyword>
<protein>
    <recommendedName>
        <fullName evidence="1">Photosystem II reaction center protein J</fullName>
        <shortName evidence="1">PSII-J</shortName>
    </recommendedName>
</protein>